<dbReference type="PDB" id="1CZP">
    <property type="method" value="X-ray"/>
    <property type="resolution" value="1.17 A"/>
    <property type="chains" value="A/B=2-99"/>
</dbReference>
<dbReference type="PDB" id="1EWY">
    <property type="method" value="X-ray"/>
    <property type="resolution" value="2.38 A"/>
    <property type="chains" value="C=2-99"/>
</dbReference>
<dbReference type="PDB" id="1QT9">
    <property type="method" value="X-ray"/>
    <property type="resolution" value="1.30 A"/>
    <property type="chains" value="A=2-99"/>
</dbReference>
<dbReference type="PDBsum" id="1CZP"/>
<dbReference type="PDBsum" id="1EWY"/>
<dbReference type="PDBsum" id="1QT9"/>
<dbReference type="BMRB" id="P0A3C8"/>
<dbReference type="SASBDB" id="P0A3C8"/>
<dbReference type="SMR" id="P0A3C8"/>
<dbReference type="IntAct" id="P0A3C8">
    <property type="interactions" value="2"/>
</dbReference>
<dbReference type="EvolutionaryTrace" id="P0A3C8"/>
<dbReference type="GO" id="GO:0051537">
    <property type="term" value="F:2 iron, 2 sulfur cluster binding"/>
    <property type="evidence" value="ECO:0007669"/>
    <property type="project" value="UniProtKB-KW"/>
</dbReference>
<dbReference type="GO" id="GO:0009055">
    <property type="term" value="F:electron transfer activity"/>
    <property type="evidence" value="ECO:0007669"/>
    <property type="project" value="InterPro"/>
</dbReference>
<dbReference type="GO" id="GO:0046872">
    <property type="term" value="F:metal ion binding"/>
    <property type="evidence" value="ECO:0007669"/>
    <property type="project" value="UniProtKB-KW"/>
</dbReference>
<dbReference type="GO" id="GO:0022900">
    <property type="term" value="P:electron transport chain"/>
    <property type="evidence" value="ECO:0007669"/>
    <property type="project" value="InterPro"/>
</dbReference>
<dbReference type="CDD" id="cd00207">
    <property type="entry name" value="fer2"/>
    <property type="match status" value="1"/>
</dbReference>
<dbReference type="FunFam" id="3.10.20.30:FF:000014">
    <property type="entry name" value="Ferredoxin"/>
    <property type="match status" value="1"/>
</dbReference>
<dbReference type="Gene3D" id="3.10.20.30">
    <property type="match status" value="1"/>
</dbReference>
<dbReference type="InterPro" id="IPR036010">
    <property type="entry name" value="2Fe-2S_ferredoxin-like_sf"/>
</dbReference>
<dbReference type="InterPro" id="IPR001041">
    <property type="entry name" value="2Fe-2S_ferredoxin-type"/>
</dbReference>
<dbReference type="InterPro" id="IPR006058">
    <property type="entry name" value="2Fe2S_fd_BS"/>
</dbReference>
<dbReference type="InterPro" id="IPR012675">
    <property type="entry name" value="Beta-grasp_dom_sf"/>
</dbReference>
<dbReference type="InterPro" id="IPR010241">
    <property type="entry name" value="Fd_pln"/>
</dbReference>
<dbReference type="NCBIfam" id="TIGR02008">
    <property type="entry name" value="fdx_plant"/>
    <property type="match status" value="1"/>
</dbReference>
<dbReference type="PANTHER" id="PTHR43112">
    <property type="entry name" value="FERREDOXIN"/>
    <property type="match status" value="1"/>
</dbReference>
<dbReference type="PANTHER" id="PTHR43112:SF3">
    <property type="entry name" value="FERREDOXIN-2, CHLOROPLASTIC"/>
    <property type="match status" value="1"/>
</dbReference>
<dbReference type="Pfam" id="PF00111">
    <property type="entry name" value="Fer2"/>
    <property type="match status" value="1"/>
</dbReference>
<dbReference type="SUPFAM" id="SSF54292">
    <property type="entry name" value="2Fe-2S ferredoxin-like"/>
    <property type="match status" value="1"/>
</dbReference>
<dbReference type="PROSITE" id="PS00197">
    <property type="entry name" value="2FE2S_FER_1"/>
    <property type="match status" value="1"/>
</dbReference>
<dbReference type="PROSITE" id="PS51085">
    <property type="entry name" value="2FE2S_FER_2"/>
    <property type="match status" value="1"/>
</dbReference>
<reference key="1">
    <citation type="journal article" date="1999" name="Biochemistry">
        <title>Refined X-ray structures of the oxidized, at 1.3 A, and reduced, at 1.17 A, [2Fe-2S] ferredoxin from the cyanobacterium anabaena PCC7119 show redox-linked conformational changes.</title>
        <authorList>
            <person name="Morales R."/>
            <person name="Charon M.-H."/>
            <person name="Hudry-Clergeon G."/>
            <person name="Petillot Y."/>
            <person name="Norager S."/>
            <person name="Medina M."/>
            <person name="Frey M."/>
        </authorList>
    </citation>
    <scope>PROTEIN SEQUENCE OF 2-99</scope>
    <scope>X-RAY CRYSTALLOGRAPHY (1.3 ANGSTROMS)</scope>
</reference>
<reference key="2">
    <citation type="journal article" date="2000" name="Acta Crystallogr. D">
        <title>Crystallographic studies of the interaction between the ferredoxin-NADP+ reductase and ferredoxin from the cyanobacterium Anabaena: looking for the elusive ferredoxin molecule.</title>
        <authorList>
            <person name="Morales R."/>
            <person name="Kachalova G."/>
            <person name="Vellieux F."/>
            <person name="Charon M.-H."/>
            <person name="Frey M."/>
        </authorList>
    </citation>
    <scope>X-RAY CRYSTALLOGRAPHY (2.38 ANGSTROMS)</scope>
</reference>
<proteinExistence type="evidence at protein level"/>
<keyword id="KW-0001">2Fe-2S</keyword>
<keyword id="KW-0002">3D-structure</keyword>
<keyword id="KW-0903">Direct protein sequencing</keyword>
<keyword id="KW-0249">Electron transport</keyword>
<keyword id="KW-0408">Iron</keyword>
<keyword id="KW-0411">Iron-sulfur</keyword>
<keyword id="KW-0479">Metal-binding</keyword>
<keyword id="KW-0813">Transport</keyword>
<protein>
    <recommendedName>
        <fullName>Ferredoxin-1</fullName>
    </recommendedName>
    <alternativeName>
        <fullName>Ferredoxin I</fullName>
    </alternativeName>
</protein>
<name>FER1_NOSSO</name>
<accession>P0A3C8</accession>
<accession>P06543</accession>
<feature type="initiator methionine" description="Removed" evidence="3">
    <location>
        <position position="1"/>
    </location>
</feature>
<feature type="chain" id="PRO_0000189299" description="Ferredoxin-1">
    <location>
        <begin position="2"/>
        <end position="99"/>
    </location>
</feature>
<feature type="domain" description="2Fe-2S ferredoxin-type" evidence="2">
    <location>
        <begin position="4"/>
        <end position="96"/>
    </location>
</feature>
<feature type="binding site">
    <location>
        <position position="42"/>
    </location>
    <ligand>
        <name>[2Fe-2S] cluster</name>
        <dbReference type="ChEBI" id="CHEBI:190135"/>
    </ligand>
</feature>
<feature type="binding site">
    <location>
        <position position="47"/>
    </location>
    <ligand>
        <name>[2Fe-2S] cluster</name>
        <dbReference type="ChEBI" id="CHEBI:190135"/>
    </ligand>
</feature>
<feature type="binding site">
    <location>
        <position position="50"/>
    </location>
    <ligand>
        <name>[2Fe-2S] cluster</name>
        <dbReference type="ChEBI" id="CHEBI:190135"/>
    </ligand>
</feature>
<feature type="binding site">
    <location>
        <position position="80"/>
    </location>
    <ligand>
        <name>[2Fe-2S] cluster</name>
        <dbReference type="ChEBI" id="CHEBI:190135"/>
    </ligand>
</feature>
<feature type="strand" evidence="5">
    <location>
        <begin position="3"/>
        <end position="10"/>
    </location>
</feature>
<feature type="turn" evidence="5">
    <location>
        <begin position="11"/>
        <end position="14"/>
    </location>
</feature>
<feature type="strand" evidence="5">
    <location>
        <begin position="15"/>
        <end position="22"/>
    </location>
</feature>
<feature type="helix" evidence="5">
    <location>
        <begin position="27"/>
        <end position="33"/>
    </location>
</feature>
<feature type="strand" evidence="5">
    <location>
        <begin position="41"/>
        <end position="48"/>
    </location>
</feature>
<feature type="strand" evidence="5">
    <location>
        <begin position="51"/>
        <end position="57"/>
    </location>
</feature>
<feature type="helix" evidence="5">
    <location>
        <begin position="69"/>
        <end position="73"/>
    </location>
</feature>
<feature type="strand" evidence="5">
    <location>
        <begin position="76"/>
        <end position="78"/>
    </location>
</feature>
<feature type="helix" evidence="5">
    <location>
        <begin position="79"/>
        <end position="81"/>
    </location>
</feature>
<feature type="strand" evidence="5">
    <location>
        <begin position="83"/>
        <end position="86"/>
    </location>
</feature>
<feature type="strand" evidence="5">
    <location>
        <begin position="88"/>
        <end position="91"/>
    </location>
</feature>
<feature type="turn" evidence="5">
    <location>
        <begin position="95"/>
        <end position="98"/>
    </location>
</feature>
<comment type="function">
    <text>Ferredoxins are iron-sulfur proteins that transfer electrons in a wide variety of metabolic reactions.</text>
</comment>
<comment type="cofactor">
    <cofactor>
        <name>[2Fe-2S] cluster</name>
        <dbReference type="ChEBI" id="CHEBI:190135"/>
    </cofactor>
    <text>Binds 1 [2Fe-2S] cluster.</text>
</comment>
<comment type="subunit">
    <text evidence="1">Forms a complex with heterodimeric ferredoxin-thioredoxin reductase (FTR) and thioredoxin.</text>
</comment>
<comment type="interaction">
    <interactant intactId="EBI-637080">
        <id>P0A3C8</id>
    </interactant>
    <interactant intactId="EBI-593915">
        <id>P21890</id>
        <label>petH</label>
    </interactant>
    <organismsDiffer>false</organismsDiffer>
    <experiments>5</experiments>
</comment>
<comment type="similarity">
    <text evidence="4">Belongs to the 2Fe2S plant-type ferredoxin family.</text>
</comment>
<organism>
    <name type="scientific">Nostoc sp. (strain ATCC 29151 / PCC 7119)</name>
    <name type="common">Anabaena sp.</name>
    <dbReference type="NCBI Taxonomy" id="1168"/>
    <lineage>
        <taxon>Bacteria</taxon>
        <taxon>Bacillati</taxon>
        <taxon>Cyanobacteriota</taxon>
        <taxon>Cyanophyceae</taxon>
        <taxon>Nostocales</taxon>
        <taxon>Nostocaceae</taxon>
        <taxon>Nostoc</taxon>
    </lineage>
</organism>
<sequence>MATFKVTLINEAEGTKHEIEVPDDEYILDAAEEQGYDLPFSCRAGACSTCAGKLVSGTVDQSDQSFLDDDQIEAGYVLTCVAYPTSDVVIQTHKEEDLY</sequence>
<evidence type="ECO:0000250" key="1"/>
<evidence type="ECO:0000255" key="2">
    <source>
        <dbReference type="PROSITE-ProRule" id="PRU00465"/>
    </source>
</evidence>
<evidence type="ECO:0000269" key="3">
    <source>
    </source>
</evidence>
<evidence type="ECO:0000305" key="4"/>
<evidence type="ECO:0007829" key="5">
    <source>
        <dbReference type="PDB" id="1CZP"/>
    </source>
</evidence>
<gene>
    <name type="primary">petF</name>
    <name type="synonym">fdxV</name>
</gene>